<proteinExistence type="inferred from homology"/>
<organism>
    <name type="scientific">Salmonella paratyphi A (strain ATCC 9150 / SARB42)</name>
    <dbReference type="NCBI Taxonomy" id="295319"/>
    <lineage>
        <taxon>Bacteria</taxon>
        <taxon>Pseudomonadati</taxon>
        <taxon>Pseudomonadota</taxon>
        <taxon>Gammaproteobacteria</taxon>
        <taxon>Enterobacterales</taxon>
        <taxon>Enterobacteriaceae</taxon>
        <taxon>Salmonella</taxon>
    </lineage>
</organism>
<feature type="chain" id="PRO_0000209435" description="Co-chaperone protein DjlA">
    <location>
        <begin position="1"/>
        <end position="270"/>
    </location>
</feature>
<feature type="topological domain" description="Periplasmic" evidence="1">
    <location>
        <begin position="1"/>
        <end position="6"/>
    </location>
</feature>
<feature type="transmembrane region" description="Helical" evidence="1">
    <location>
        <begin position="7"/>
        <end position="31"/>
    </location>
</feature>
<feature type="topological domain" description="Cytoplasmic" evidence="1">
    <location>
        <begin position="32"/>
        <end position="270"/>
    </location>
</feature>
<feature type="domain" description="J" evidence="1">
    <location>
        <begin position="204"/>
        <end position="270"/>
    </location>
</feature>
<comment type="function">
    <text evidence="1">Regulatory DnaK co-chaperone. Direct interaction between DnaK and DjlA is needed for the induction of the wcaABCDE operon, involved in the synthesis of a colanic acid polysaccharide capsule, possibly through activation of the RcsB/RcsC phosphotransfer signaling pathway. The colanic acid capsule may help the bacterium survive conditions outside the host.</text>
</comment>
<comment type="subunit">
    <text evidence="1">Homodimer.</text>
</comment>
<comment type="subcellular location">
    <subcellularLocation>
        <location evidence="1">Cell inner membrane</location>
        <topology evidence="1">Single-pass type III membrane protein</topology>
    </subcellularLocation>
</comment>
<comment type="domain">
    <text evidence="1">The transmembrane domain is a dimerization domain.</text>
</comment>
<dbReference type="EMBL" id="CP000026">
    <property type="protein sequence ID" value="AAV76128.1"/>
    <property type="molecule type" value="Genomic_DNA"/>
</dbReference>
<dbReference type="RefSeq" id="WP_001200595.1">
    <property type="nucleotide sequence ID" value="NC_006511.1"/>
</dbReference>
<dbReference type="SMR" id="Q5PDE4"/>
<dbReference type="KEGG" id="spt:SPA0095"/>
<dbReference type="HOGENOM" id="CLU_066221_1_0_6"/>
<dbReference type="Proteomes" id="UP000008185">
    <property type="component" value="Chromosome"/>
</dbReference>
<dbReference type="GO" id="GO:0005886">
    <property type="term" value="C:plasma membrane"/>
    <property type="evidence" value="ECO:0007669"/>
    <property type="project" value="UniProtKB-SubCell"/>
</dbReference>
<dbReference type="GO" id="GO:0051087">
    <property type="term" value="F:protein-folding chaperone binding"/>
    <property type="evidence" value="ECO:0007669"/>
    <property type="project" value="InterPro"/>
</dbReference>
<dbReference type="CDD" id="cd06257">
    <property type="entry name" value="DnaJ"/>
    <property type="match status" value="1"/>
</dbReference>
<dbReference type="CDD" id="cd07316">
    <property type="entry name" value="terB_like_DjlA"/>
    <property type="match status" value="1"/>
</dbReference>
<dbReference type="FunFam" id="1.10.287.110:FF:000011">
    <property type="entry name" value="Co-chaperone protein DjlA"/>
    <property type="match status" value="1"/>
</dbReference>
<dbReference type="FunFam" id="1.10.3680.10:FF:000001">
    <property type="entry name" value="Co-chaperone protein DjlA"/>
    <property type="match status" value="1"/>
</dbReference>
<dbReference type="Gene3D" id="1.10.287.110">
    <property type="entry name" value="DnaJ domain"/>
    <property type="match status" value="1"/>
</dbReference>
<dbReference type="Gene3D" id="1.10.3680.10">
    <property type="entry name" value="TerB-like"/>
    <property type="match status" value="1"/>
</dbReference>
<dbReference type="HAMAP" id="MF_01153">
    <property type="entry name" value="DjlA"/>
    <property type="match status" value="1"/>
</dbReference>
<dbReference type="InterPro" id="IPR023749">
    <property type="entry name" value="DjlA"/>
</dbReference>
<dbReference type="InterPro" id="IPR050817">
    <property type="entry name" value="DjlA_DnaK_co-chaperone"/>
</dbReference>
<dbReference type="InterPro" id="IPR007791">
    <property type="entry name" value="DjlA_N"/>
</dbReference>
<dbReference type="InterPro" id="IPR001623">
    <property type="entry name" value="DnaJ_domain"/>
</dbReference>
<dbReference type="InterPro" id="IPR036869">
    <property type="entry name" value="J_dom_sf"/>
</dbReference>
<dbReference type="InterPro" id="IPR029024">
    <property type="entry name" value="TerB-like"/>
</dbReference>
<dbReference type="NCBIfam" id="NF006948">
    <property type="entry name" value="PRK09430.1"/>
    <property type="match status" value="1"/>
</dbReference>
<dbReference type="PANTHER" id="PTHR24074">
    <property type="entry name" value="CO-CHAPERONE PROTEIN DJLA"/>
    <property type="match status" value="1"/>
</dbReference>
<dbReference type="Pfam" id="PF00226">
    <property type="entry name" value="DnaJ"/>
    <property type="match status" value="1"/>
</dbReference>
<dbReference type="Pfam" id="PF05099">
    <property type="entry name" value="TerB"/>
    <property type="match status" value="1"/>
</dbReference>
<dbReference type="PRINTS" id="PR00625">
    <property type="entry name" value="JDOMAIN"/>
</dbReference>
<dbReference type="SMART" id="SM00271">
    <property type="entry name" value="DnaJ"/>
    <property type="match status" value="1"/>
</dbReference>
<dbReference type="SUPFAM" id="SSF46565">
    <property type="entry name" value="Chaperone J-domain"/>
    <property type="match status" value="1"/>
</dbReference>
<dbReference type="PROSITE" id="PS50076">
    <property type="entry name" value="DNAJ_2"/>
    <property type="match status" value="1"/>
</dbReference>
<protein>
    <recommendedName>
        <fullName evidence="1">Co-chaperone protein DjlA</fullName>
    </recommendedName>
</protein>
<evidence type="ECO:0000255" key="1">
    <source>
        <dbReference type="HAMAP-Rule" id="MF_01153"/>
    </source>
</evidence>
<accession>Q5PDE4</accession>
<keyword id="KW-0997">Cell inner membrane</keyword>
<keyword id="KW-1003">Cell membrane</keyword>
<keyword id="KW-0143">Chaperone</keyword>
<keyword id="KW-0472">Membrane</keyword>
<keyword id="KW-0812">Transmembrane</keyword>
<keyword id="KW-1133">Transmembrane helix</keyword>
<gene>
    <name evidence="1" type="primary">djlA</name>
    <name type="ordered locus">SPA0095</name>
</gene>
<reference key="1">
    <citation type="journal article" date="2004" name="Nat. Genet.">
        <title>Comparison of genome degradation in Paratyphi A and Typhi, human-restricted serovars of Salmonella enterica that cause typhoid.</title>
        <authorList>
            <person name="McClelland M."/>
            <person name="Sanderson K.E."/>
            <person name="Clifton S.W."/>
            <person name="Latreille P."/>
            <person name="Porwollik S."/>
            <person name="Sabo A."/>
            <person name="Meyer R."/>
            <person name="Bieri T."/>
            <person name="Ozersky P."/>
            <person name="McLellan M."/>
            <person name="Harkins C.R."/>
            <person name="Wang C."/>
            <person name="Nguyen C."/>
            <person name="Berghoff A."/>
            <person name="Elliott G."/>
            <person name="Kohlberg S."/>
            <person name="Strong C."/>
            <person name="Du F."/>
            <person name="Carter J."/>
            <person name="Kremizki C."/>
            <person name="Layman D."/>
            <person name="Leonard S."/>
            <person name="Sun H."/>
            <person name="Fulton L."/>
            <person name="Nash W."/>
            <person name="Miner T."/>
            <person name="Minx P."/>
            <person name="Delehaunty K."/>
            <person name="Fronick C."/>
            <person name="Magrini V."/>
            <person name="Nhan M."/>
            <person name="Warren W."/>
            <person name="Florea L."/>
            <person name="Spieth J."/>
            <person name="Wilson R.K."/>
        </authorList>
    </citation>
    <scope>NUCLEOTIDE SEQUENCE [LARGE SCALE GENOMIC DNA]</scope>
    <source>
        <strain>ATCC 9150 / SARB42</strain>
    </source>
</reference>
<sequence length="270" mass="30583">MQYWGKIIGVAVALMMGGGFWGVVLGLLVGHMFDKARSRKMAWFANQRERQALFFATTFEVMGHLTKSKGRVTEADIHIASQLMDRMNLHGDSRTAAQNAFRVGKADNYPLREKMRQFRSVCFGRFDLIRMFLEIQIQAAFADGSLHPNEREVLYVIAEELGISRVQFDQFLRMMQGGAQFGGGYHQQSGGGWQQAQRGPTLEDACNVLGVKTTDDATTIKRAYRKLMSEHHPDKLVAKGLPPEMMEMAKQKAQEIQKAYELIKEQKGFK</sequence>
<name>DJLA_SALPA</name>